<gene>
    <name evidence="2" type="primary">yibX</name>
    <name evidence="3" type="ordered locus">b4795</name>
</gene>
<dbReference type="EMBL" id="U00096">
    <property type="protein sequence ID" value="QNV50548.1"/>
    <property type="molecule type" value="Genomic_DNA"/>
</dbReference>
<dbReference type="EMBL" id="U00096">
    <property type="protein sequence ID" value="QNV50549.1"/>
    <property type="molecule type" value="Genomic_DNA"/>
</dbReference>
<dbReference type="InParanoid" id="P0DSH3"/>
<dbReference type="BioCyc" id="EcoCyc:MONOMER0-4508"/>
<dbReference type="Proteomes" id="UP000000625">
    <property type="component" value="Chromosome"/>
</dbReference>
<dbReference type="Pfam" id="PF22870">
    <property type="entry name" value="YibX"/>
    <property type="match status" value="1"/>
</dbReference>
<keyword id="KW-0024">Alternative initiation</keyword>
<keyword id="KW-1185">Reference proteome</keyword>
<comment type="alternative products">
    <event type="alternative initiation"/>
    <isoform>
        <id>P0DSH3-1</id>
        <name>YbiX</name>
        <sequence type="displayed"/>
    </isoform>
    <isoform>
        <id>P0DSH3-2</id>
        <name>Ybix-S</name>
        <sequence type="described" ref="VSP_060150"/>
    </isoform>
</comment>
<comment type="induction">
    <text evidence="1">The YbiX-S short isoform is expressed in both exponential and stationary phase in rich medium; expression is higher during exponential phase (at protein level). The YbiX long isoform seems only to be expressed in exponential phase at low levels (at protein level).</text>
</comment>
<comment type="miscellaneous">
    <text evidence="1">Encoded antisense to waaL; both isoforms are encoded within the waaL gene.</text>
</comment>
<proteinExistence type="evidence at protein level"/>
<sequence length="80" mass="8757">MEKIPIRPFSDPASIISLCRCTLENSNAPLSLLCSATNKFILSARDSADLNEKGDFMNIFKPISYIASLAPREVTLLALV</sequence>
<accession>P0DSH3</accession>
<accession>A0A7H2C7A1</accession>
<accession>A0A7H2C7A2</accession>
<organism>
    <name type="scientific">Escherichia coli (strain K12)</name>
    <dbReference type="NCBI Taxonomy" id="83333"/>
    <lineage>
        <taxon>Bacteria</taxon>
        <taxon>Pseudomonadati</taxon>
        <taxon>Pseudomonadota</taxon>
        <taxon>Gammaproteobacteria</taxon>
        <taxon>Enterobacterales</taxon>
        <taxon>Enterobacteriaceae</taxon>
        <taxon>Escherichia</taxon>
    </lineage>
</organism>
<name>YIBX_ECOLI</name>
<protein>
    <recommendedName>
        <fullName evidence="2">Protein YibX</fullName>
    </recommendedName>
</protein>
<reference key="1">
    <citation type="journal article" date="1997" name="Science">
        <title>The complete genome sequence of Escherichia coli K-12.</title>
        <authorList>
            <person name="Blattner F.R."/>
            <person name="Plunkett G. III"/>
            <person name="Bloch C.A."/>
            <person name="Perna N.T."/>
            <person name="Burland V."/>
            <person name="Riley M."/>
            <person name="Collado-Vides J."/>
            <person name="Glasner J.D."/>
            <person name="Rode C.K."/>
            <person name="Mayhew G.F."/>
            <person name="Gregor J."/>
            <person name="Davis N.W."/>
            <person name="Kirkpatrick H.A."/>
            <person name="Goeden M.A."/>
            <person name="Rose D.J."/>
            <person name="Mau B."/>
            <person name="Shao Y."/>
        </authorList>
    </citation>
    <scope>NUCLEOTIDE SEQUENCE [LARGE SCALE GENOMIC DNA]</scope>
    <source>
        <strain>K12 / MG1655 / ATCC 47076</strain>
    </source>
</reference>
<reference key="2">
    <citation type="journal article" date="2019" name="MBio">
        <title>Identifying small proteins by ribosome profiling with stalled initiation complexes.</title>
        <authorList>
            <person name="Weaver J."/>
            <person name="Mohammad F."/>
            <person name="Buskirk A.R."/>
            <person name="Storz G."/>
        </authorList>
    </citation>
    <scope>IDENTIFICATION</scope>
    <scope>PROBABLE ALTERNATIVE INITIATION OF YBIX-S</scope>
    <scope>INDUCTION</scope>
    <source>
        <strain>K12 / MG1655 / ATCC 47076</strain>
    </source>
</reference>
<evidence type="ECO:0000269" key="1">
    <source>
    </source>
</evidence>
<evidence type="ECO:0000303" key="2">
    <source>
    </source>
</evidence>
<evidence type="ECO:0000312" key="3">
    <source>
        <dbReference type="EMBL" id="QNV50549.1"/>
    </source>
</evidence>
<feature type="chain" id="PRO_0000447151" description="Protein YibX">
    <location>
        <begin position="1"/>
        <end position="80"/>
    </location>
</feature>
<feature type="splice variant" id="VSP_060150" description="In isoform Ybix-S.">
    <location>
        <begin position="1"/>
        <end position="56"/>
    </location>
</feature>